<keyword id="KW-0029">Amino-acid transport</keyword>
<keyword id="KW-0997">Cell inner membrane</keyword>
<keyword id="KW-1003">Cell membrane</keyword>
<keyword id="KW-0472">Membrane</keyword>
<keyword id="KW-0769">Symport</keyword>
<keyword id="KW-0812">Transmembrane</keyword>
<keyword id="KW-1133">Transmembrane helix</keyword>
<keyword id="KW-0813">Transport</keyword>
<comment type="function">
    <text evidence="1">Involved in the import of serine and threonine into the cell, with the concomitant import of sodium (symport system).</text>
</comment>
<comment type="catalytic activity">
    <reaction evidence="1">
        <text>L-serine(in) + Na(+)(in) = L-serine(out) + Na(+)(out)</text>
        <dbReference type="Rhea" id="RHEA:29575"/>
        <dbReference type="ChEBI" id="CHEBI:29101"/>
        <dbReference type="ChEBI" id="CHEBI:33384"/>
    </reaction>
    <physiologicalReaction direction="right-to-left" evidence="1">
        <dbReference type="Rhea" id="RHEA:29577"/>
    </physiologicalReaction>
</comment>
<comment type="catalytic activity">
    <reaction evidence="1">
        <text>L-threonine(in) + Na(+)(in) = L-threonine(out) + Na(+)(out)</text>
        <dbReference type="Rhea" id="RHEA:69999"/>
        <dbReference type="ChEBI" id="CHEBI:29101"/>
        <dbReference type="ChEBI" id="CHEBI:57926"/>
    </reaction>
    <physiologicalReaction direction="right-to-left" evidence="1">
        <dbReference type="Rhea" id="RHEA:70001"/>
    </physiologicalReaction>
</comment>
<comment type="subcellular location">
    <subcellularLocation>
        <location evidence="1">Cell inner membrane</location>
        <topology evidence="1">Multi-pass membrane protein</topology>
    </subcellularLocation>
</comment>
<comment type="similarity">
    <text evidence="1">Belongs to the dicarboxylate/amino acid:cation symporter (DAACS) (TC 2.A.23) family.</text>
</comment>
<feature type="chain" id="PRO_1000197552" description="Serine/threonine transporter SstT">
    <location>
        <begin position="1"/>
        <end position="415"/>
    </location>
</feature>
<feature type="transmembrane region" description="Helical" evidence="1">
    <location>
        <begin position="23"/>
        <end position="43"/>
    </location>
</feature>
<feature type="transmembrane region" description="Helical" evidence="1">
    <location>
        <begin position="47"/>
        <end position="67"/>
    </location>
</feature>
<feature type="transmembrane region" description="Helical" evidence="1">
    <location>
        <begin position="85"/>
        <end position="105"/>
    </location>
</feature>
<feature type="transmembrane region" description="Helical" evidence="1">
    <location>
        <begin position="144"/>
        <end position="164"/>
    </location>
</feature>
<feature type="transmembrane region" description="Helical" evidence="1">
    <location>
        <begin position="181"/>
        <end position="201"/>
    </location>
</feature>
<feature type="transmembrane region" description="Helical" evidence="1">
    <location>
        <begin position="220"/>
        <end position="240"/>
    </location>
</feature>
<feature type="transmembrane region" description="Helical" evidence="1">
    <location>
        <begin position="293"/>
        <end position="313"/>
    </location>
</feature>
<feature type="transmembrane region" description="Helical" evidence="1">
    <location>
        <begin position="333"/>
        <end position="353"/>
    </location>
</feature>
<organism>
    <name type="scientific">Klebsiella pneumoniae (strain 342)</name>
    <dbReference type="NCBI Taxonomy" id="507522"/>
    <lineage>
        <taxon>Bacteria</taxon>
        <taxon>Pseudomonadati</taxon>
        <taxon>Pseudomonadota</taxon>
        <taxon>Gammaproteobacteria</taxon>
        <taxon>Enterobacterales</taxon>
        <taxon>Enterobacteriaceae</taxon>
        <taxon>Klebsiella/Raoultella group</taxon>
        <taxon>Klebsiella</taxon>
        <taxon>Klebsiella pneumoniae complex</taxon>
    </lineage>
</organism>
<reference key="1">
    <citation type="journal article" date="2008" name="PLoS Genet.">
        <title>Complete genome sequence of the N2-fixing broad host range endophyte Klebsiella pneumoniae 342 and virulence predictions verified in mice.</title>
        <authorList>
            <person name="Fouts D.E."/>
            <person name="Tyler H.L."/>
            <person name="DeBoy R.T."/>
            <person name="Daugherty S."/>
            <person name="Ren Q."/>
            <person name="Badger J.H."/>
            <person name="Durkin A.S."/>
            <person name="Huot H."/>
            <person name="Shrivastava S."/>
            <person name="Kothari S."/>
            <person name="Dodson R.J."/>
            <person name="Mohamoud Y."/>
            <person name="Khouri H."/>
            <person name="Roesch L.F.W."/>
            <person name="Krogfelt K.A."/>
            <person name="Struve C."/>
            <person name="Triplett E.W."/>
            <person name="Methe B.A."/>
        </authorList>
    </citation>
    <scope>NUCLEOTIDE SEQUENCE [LARGE SCALE GENOMIC DNA]</scope>
    <source>
        <strain>342</strain>
    </source>
</reference>
<dbReference type="EMBL" id="CP000964">
    <property type="protein sequence ID" value="ACI11655.1"/>
    <property type="molecule type" value="Genomic_DNA"/>
</dbReference>
<dbReference type="SMR" id="B5XTX0"/>
<dbReference type="KEGG" id="kpe:KPK_0594"/>
<dbReference type="HOGENOM" id="CLU_044581_0_0_6"/>
<dbReference type="Proteomes" id="UP000001734">
    <property type="component" value="Chromosome"/>
</dbReference>
<dbReference type="GO" id="GO:0005886">
    <property type="term" value="C:plasma membrane"/>
    <property type="evidence" value="ECO:0007669"/>
    <property type="project" value="UniProtKB-SubCell"/>
</dbReference>
<dbReference type="GO" id="GO:0005295">
    <property type="term" value="F:neutral L-amino acid:sodium symporter activity"/>
    <property type="evidence" value="ECO:0007669"/>
    <property type="project" value="TreeGrafter"/>
</dbReference>
<dbReference type="GO" id="GO:0032329">
    <property type="term" value="P:serine transport"/>
    <property type="evidence" value="ECO:0007669"/>
    <property type="project" value="InterPro"/>
</dbReference>
<dbReference type="GO" id="GO:0015826">
    <property type="term" value="P:threonine transport"/>
    <property type="evidence" value="ECO:0007669"/>
    <property type="project" value="InterPro"/>
</dbReference>
<dbReference type="FunFam" id="1.10.3860.10:FF:000003">
    <property type="entry name" value="Serine/threonine transporter sstT"/>
    <property type="match status" value="1"/>
</dbReference>
<dbReference type="Gene3D" id="1.10.3860.10">
    <property type="entry name" value="Sodium:dicarboxylate symporter"/>
    <property type="match status" value="1"/>
</dbReference>
<dbReference type="HAMAP" id="MF_01582">
    <property type="entry name" value="Ser_Thr_transp_SstT"/>
    <property type="match status" value="1"/>
</dbReference>
<dbReference type="InterPro" id="IPR001991">
    <property type="entry name" value="Na-dicarboxylate_symporter"/>
</dbReference>
<dbReference type="InterPro" id="IPR036458">
    <property type="entry name" value="Na:dicarbo_symporter_sf"/>
</dbReference>
<dbReference type="InterPro" id="IPR023025">
    <property type="entry name" value="Ser_Thr_transp_SstT"/>
</dbReference>
<dbReference type="NCBIfam" id="NF010151">
    <property type="entry name" value="PRK13628.1"/>
    <property type="match status" value="1"/>
</dbReference>
<dbReference type="PANTHER" id="PTHR42865">
    <property type="entry name" value="PROTON/GLUTAMATE-ASPARTATE SYMPORTER"/>
    <property type="match status" value="1"/>
</dbReference>
<dbReference type="PANTHER" id="PTHR42865:SF8">
    <property type="entry name" value="SERINE_THREONINE TRANSPORTER SSTT"/>
    <property type="match status" value="1"/>
</dbReference>
<dbReference type="Pfam" id="PF00375">
    <property type="entry name" value="SDF"/>
    <property type="match status" value="1"/>
</dbReference>
<dbReference type="PRINTS" id="PR00173">
    <property type="entry name" value="EDTRNSPORT"/>
</dbReference>
<dbReference type="SUPFAM" id="SSF118215">
    <property type="entry name" value="Proton glutamate symport protein"/>
    <property type="match status" value="1"/>
</dbReference>
<dbReference type="PROSITE" id="PS00713">
    <property type="entry name" value="NA_DICARBOXYL_SYMP_1"/>
    <property type="match status" value="1"/>
</dbReference>
<gene>
    <name evidence="1" type="primary">sstT</name>
    <name type="ordered locus">KPK_0594</name>
</gene>
<name>SSTT_KLEP3</name>
<accession>B5XTX0</accession>
<protein>
    <recommendedName>
        <fullName evidence="1">Serine/threonine transporter SstT</fullName>
    </recommendedName>
    <alternativeName>
        <fullName evidence="1">Na(+)/serine-threonine symporter</fullName>
    </alternativeName>
</protein>
<evidence type="ECO:0000255" key="1">
    <source>
        <dbReference type="HAMAP-Rule" id="MF_01582"/>
    </source>
</evidence>
<sequence length="415" mass="43488">MTTRTPPSGWISRLAQGSLVKQILIGLVLGVLLALVSKPAAIAVGLLGTLFVGALKAVAPVLVLMLVMASIANHQHGQKTSIRPILFLYLLGTFSAALTAVLFSFVFPSTLHLTTAADSITPPSGIVEVLRGLLMSMVSNPIDALLNANYIGILVWAVGLGFALRHGNDTTKNLINDVSHAVTFIVKVVIRFAPLGIFGLVSSTLATTGFETLWGYAQLLLVLVGCMLLVALVINPLLVFWKIRRNPYPLVLTCLRESGVYAFFTRSSAANIPVNMALCEKLNLDRDTYSVSIPLGATINMAGAAITITVLTLAAVHTLNIPVDLPTALLLSVVASLCACGASGVAGGSLLLIPLACNMFGIPNDVAMQVVAVGFIIGVLQDSCETALNSSTDALFTAAACIAEDDQLAKNALRS</sequence>
<proteinExistence type="inferred from homology"/>